<reference key="1">
    <citation type="journal article" date="2008" name="Proc. Natl. Acad. Sci. U.S.A.">
        <title>The genome of Clostridium kluyveri, a strict anaerobe with unique metabolic features.</title>
        <authorList>
            <person name="Seedorf H."/>
            <person name="Fricke W.F."/>
            <person name="Veith B."/>
            <person name="Brueggemann H."/>
            <person name="Liesegang H."/>
            <person name="Strittmatter A."/>
            <person name="Miethke M."/>
            <person name="Buckel W."/>
            <person name="Hinderberger J."/>
            <person name="Li F."/>
            <person name="Hagemeier C."/>
            <person name="Thauer R.K."/>
            <person name="Gottschalk G."/>
        </authorList>
    </citation>
    <scope>NUCLEOTIDE SEQUENCE [LARGE SCALE GENOMIC DNA]</scope>
    <source>
        <strain>ATCC 8527 / DSM 555 / NBRC 12016 / NCIMB 10680 / K1</strain>
    </source>
</reference>
<name>Y1364_CLOK5</name>
<sequence length="92" mass="10067">MGIKLINIGFGNIVSANRLIAIVSPESAPIKRIIQEARDRGMLIDATYGRRTRAVIITDSDHVILSAVQPETVAHRLSTKGEEDEISEVEAQ</sequence>
<accession>A5N7X5</accession>
<organism>
    <name type="scientific">Clostridium kluyveri (strain ATCC 8527 / DSM 555 / NBRC 12016 / NCIMB 10680 / K1)</name>
    <dbReference type="NCBI Taxonomy" id="431943"/>
    <lineage>
        <taxon>Bacteria</taxon>
        <taxon>Bacillati</taxon>
        <taxon>Bacillota</taxon>
        <taxon>Clostridia</taxon>
        <taxon>Eubacteriales</taxon>
        <taxon>Clostridiaceae</taxon>
        <taxon>Clostridium</taxon>
    </lineage>
</organism>
<evidence type="ECO:0000255" key="1">
    <source>
        <dbReference type="HAMAP-Rule" id="MF_01503"/>
    </source>
</evidence>
<proteinExistence type="inferred from homology"/>
<gene>
    <name type="ordered locus">CKL_1364</name>
</gene>
<protein>
    <recommendedName>
        <fullName evidence="1">Putative regulatory protein CKL_1364</fullName>
    </recommendedName>
</protein>
<dbReference type="EMBL" id="CP000673">
    <property type="protein sequence ID" value="EDK33406.1"/>
    <property type="molecule type" value="Genomic_DNA"/>
</dbReference>
<dbReference type="SMR" id="A5N7X5"/>
<dbReference type="STRING" id="431943.CKL_1364"/>
<dbReference type="KEGG" id="ckl:CKL_1364"/>
<dbReference type="eggNOG" id="COG2052">
    <property type="taxonomic scope" value="Bacteria"/>
</dbReference>
<dbReference type="HOGENOM" id="CLU_165326_0_0_9"/>
<dbReference type="Proteomes" id="UP000002411">
    <property type="component" value="Chromosome"/>
</dbReference>
<dbReference type="HAMAP" id="MF_01503">
    <property type="entry name" value="RemA"/>
    <property type="match status" value="1"/>
</dbReference>
<dbReference type="InterPro" id="IPR007169">
    <property type="entry name" value="RemA-like"/>
</dbReference>
<dbReference type="NCBIfam" id="NF046064">
    <property type="entry name" value="MtxBflmRegRemA"/>
    <property type="match status" value="1"/>
</dbReference>
<dbReference type="NCBIfam" id="NF003315">
    <property type="entry name" value="PRK04323.1"/>
    <property type="match status" value="1"/>
</dbReference>
<dbReference type="PANTHER" id="PTHR38449:SF1">
    <property type="entry name" value="REGULATORY PROTEIN SSL2874-RELATED"/>
    <property type="match status" value="1"/>
</dbReference>
<dbReference type="PANTHER" id="PTHR38449">
    <property type="entry name" value="REGULATORY PROTEIN TM_1690-RELATED"/>
    <property type="match status" value="1"/>
</dbReference>
<dbReference type="Pfam" id="PF04025">
    <property type="entry name" value="RemA-like"/>
    <property type="match status" value="1"/>
</dbReference>
<keyword id="KW-1185">Reference proteome</keyword>
<comment type="similarity">
    <text evidence="1">Belongs to the RemA family.</text>
</comment>
<feature type="chain" id="PRO_1000087511" description="Putative regulatory protein CKL_1364">
    <location>
        <begin position="1"/>
        <end position="92"/>
    </location>
</feature>